<feature type="chain" id="PRO_0000235250" description="Mitoferrin-1">
    <location>
        <begin position="1"/>
        <end position="171"/>
    </location>
</feature>
<feature type="transmembrane region" description="Helical; Name=1" evidence="3">
    <location>
        <begin position="45"/>
        <end position="64"/>
    </location>
</feature>
<feature type="transmembrane region" description="Helical; Name=2" evidence="3">
    <location>
        <begin position="105"/>
        <end position="125"/>
    </location>
</feature>
<feature type="transmembrane region" description="Helical; Name=3" evidence="3">
    <location>
        <begin position="143"/>
        <end position="163"/>
    </location>
</feature>
<feature type="repeat" description="Solcar">
    <location>
        <begin position="43"/>
        <end position="131"/>
    </location>
</feature>
<feature type="region of interest" description="Disordered" evidence="4">
    <location>
        <begin position="1"/>
        <end position="40"/>
    </location>
</feature>
<comment type="function">
    <text evidence="2">Mitochondrial iron transporter that specifically mediates iron uptake in developing erythroid cells, thereby playing an essential role in heme biosynthesis.</text>
</comment>
<comment type="catalytic activity">
    <reaction evidence="2">
        <text>Fe(2+)(in) = Fe(2+)(out)</text>
        <dbReference type="Rhea" id="RHEA:28486"/>
        <dbReference type="ChEBI" id="CHEBI:29033"/>
    </reaction>
</comment>
<comment type="subunit">
    <text evidence="2">Interacts with ACB10; this interaction stabilizes SLC25A37 and enhances the function of SLC25A37 to import mitochondrial iron during erythroid differentiation.</text>
</comment>
<comment type="subcellular location">
    <subcellularLocation>
        <location evidence="1">Mitochondrion inner membrane</location>
        <topology evidence="3">Multi-pass membrane protein</topology>
    </subcellularLocation>
</comment>
<comment type="similarity">
    <text evidence="5">Belongs to the mitochondrial carrier (TC 2.A.29) family.</text>
</comment>
<dbReference type="EMBL" id="BC103255">
    <property type="protein sequence ID" value="AAI03256.1"/>
    <property type="molecule type" value="mRNA"/>
</dbReference>
<dbReference type="RefSeq" id="NP_001029721.1">
    <property type="nucleotide sequence ID" value="NM_001034549.1"/>
</dbReference>
<dbReference type="SMR" id="Q3ZBJ8"/>
<dbReference type="FunCoup" id="Q3ZBJ8">
    <property type="interactions" value="2"/>
</dbReference>
<dbReference type="STRING" id="9913.ENSBTAP00000025426"/>
<dbReference type="PaxDb" id="9913-ENSBTAP00000025426"/>
<dbReference type="GeneID" id="523756"/>
<dbReference type="KEGG" id="bta:523756"/>
<dbReference type="eggNOG" id="KOG0760">
    <property type="taxonomic scope" value="Eukaryota"/>
</dbReference>
<dbReference type="InParanoid" id="Q3ZBJ8"/>
<dbReference type="OrthoDB" id="43906at2759"/>
<dbReference type="Proteomes" id="UP000009136">
    <property type="component" value="Unplaced"/>
</dbReference>
<dbReference type="GO" id="GO:0005743">
    <property type="term" value="C:mitochondrial inner membrane"/>
    <property type="evidence" value="ECO:0007669"/>
    <property type="project" value="UniProtKB-SubCell"/>
</dbReference>
<dbReference type="GO" id="GO:0031966">
    <property type="term" value="C:mitochondrial membrane"/>
    <property type="evidence" value="ECO:0000318"/>
    <property type="project" value="GO_Central"/>
</dbReference>
<dbReference type="GO" id="GO:0005739">
    <property type="term" value="C:mitochondrion"/>
    <property type="evidence" value="ECO:0000250"/>
    <property type="project" value="UniProtKB"/>
</dbReference>
<dbReference type="GO" id="GO:0015093">
    <property type="term" value="F:ferrous iron transmembrane transporter activity"/>
    <property type="evidence" value="ECO:0000318"/>
    <property type="project" value="GO_Central"/>
</dbReference>
<dbReference type="GO" id="GO:0048250">
    <property type="term" value="P:iron import into the mitochondrion"/>
    <property type="evidence" value="ECO:0000318"/>
    <property type="project" value="GO_Central"/>
</dbReference>
<dbReference type="GO" id="GO:0046985">
    <property type="term" value="P:positive regulation of hemoglobin biosynthetic process"/>
    <property type="evidence" value="ECO:0000250"/>
    <property type="project" value="UniProtKB"/>
</dbReference>
<dbReference type="FunFam" id="1.50.40.10:FF:000114">
    <property type="entry name" value="Solute carrier family 25 member 37"/>
    <property type="match status" value="1"/>
</dbReference>
<dbReference type="Gene3D" id="1.50.40.10">
    <property type="entry name" value="Mitochondrial carrier domain"/>
    <property type="match status" value="1"/>
</dbReference>
<dbReference type="InterPro" id="IPR018108">
    <property type="entry name" value="Mitochondrial_sb/sol_carrier"/>
</dbReference>
<dbReference type="InterPro" id="IPR023395">
    <property type="entry name" value="Mt_carrier_dom_sf"/>
</dbReference>
<dbReference type="PANTHER" id="PTHR45758:SF4">
    <property type="entry name" value="MITOFERRIN-1"/>
    <property type="match status" value="1"/>
</dbReference>
<dbReference type="PANTHER" id="PTHR45758">
    <property type="entry name" value="MITOFERRIN-1-RELATED"/>
    <property type="match status" value="1"/>
</dbReference>
<dbReference type="Pfam" id="PF00153">
    <property type="entry name" value="Mito_carr"/>
    <property type="match status" value="1"/>
</dbReference>
<dbReference type="SUPFAM" id="SSF103506">
    <property type="entry name" value="Mitochondrial carrier"/>
    <property type="match status" value="1"/>
</dbReference>
<dbReference type="PROSITE" id="PS50920">
    <property type="entry name" value="SOLCAR"/>
    <property type="match status" value="1"/>
</dbReference>
<gene>
    <name type="primary">SLC25A37</name>
    <name type="synonym">MFRN</name>
</gene>
<reference key="1">
    <citation type="submission" date="2005-08" db="EMBL/GenBank/DDBJ databases">
        <authorList>
            <consortium name="NIH - Mammalian Gene Collection (MGC) project"/>
        </authorList>
    </citation>
    <scope>NUCLEOTIDE SEQUENCE [LARGE SCALE MRNA]</scope>
    <source>
        <strain>Hereford</strain>
        <tissue>Kidney</tissue>
    </source>
</reference>
<keyword id="KW-0406">Ion transport</keyword>
<keyword id="KW-0408">Iron</keyword>
<keyword id="KW-0410">Iron transport</keyword>
<keyword id="KW-0472">Membrane</keyword>
<keyword id="KW-0496">Mitochondrion</keyword>
<keyword id="KW-0999">Mitochondrion inner membrane</keyword>
<keyword id="KW-1185">Reference proteome</keyword>
<keyword id="KW-0812">Transmembrane</keyword>
<keyword id="KW-1133">Transmembrane helix</keyword>
<keyword id="KW-0813">Transport</keyword>
<accession>Q3ZBJ8</accession>
<protein>
    <recommendedName>
        <fullName>Mitoferrin-1</fullName>
    </recommendedName>
    <alternativeName>
        <fullName>Mitochondrial iron transporter 1</fullName>
    </alternativeName>
    <alternativeName>
        <fullName>Solute carrier family 25 member 37</fullName>
    </alternativeName>
</protein>
<evidence type="ECO:0000250" key="1">
    <source>
        <dbReference type="UniProtKB" id="Q287T7"/>
    </source>
</evidence>
<evidence type="ECO:0000250" key="2">
    <source>
        <dbReference type="UniProtKB" id="Q920G8"/>
    </source>
</evidence>
<evidence type="ECO:0000255" key="3"/>
<evidence type="ECO:0000256" key="4">
    <source>
        <dbReference type="SAM" id="MobiDB-lite"/>
    </source>
</evidence>
<evidence type="ECO:0000305" key="5"/>
<name>MFRN1_BOVIN</name>
<organism>
    <name type="scientific">Bos taurus</name>
    <name type="common">Bovine</name>
    <dbReference type="NCBI Taxonomy" id="9913"/>
    <lineage>
        <taxon>Eukaryota</taxon>
        <taxon>Metazoa</taxon>
        <taxon>Chordata</taxon>
        <taxon>Craniata</taxon>
        <taxon>Vertebrata</taxon>
        <taxon>Euteleostomi</taxon>
        <taxon>Mammalia</taxon>
        <taxon>Eutheria</taxon>
        <taxon>Laurasiatheria</taxon>
        <taxon>Artiodactyla</taxon>
        <taxon>Ruminantia</taxon>
        <taxon>Pecora</taxon>
        <taxon>Bovidae</taxon>
        <taxon>Bovinae</taxon>
        <taxon>Bos</taxon>
    </lineage>
</organism>
<sequence>MELRRGGVGSQARARRMDGDSRDGGGGCKDAGSEDYENLPTSASLSTHMTAGAMAGILEHSVMYPVDSVKTRMQSLNPDPKAHYTSVYGALKKIIRTEGFWRPLRGLNVMMMGAGPAHAMYFACYENMKRTLNAVFHHQGNSHLANGICKRLSGVRKVSPSTDPSPGFSSL</sequence>
<proteinExistence type="evidence at transcript level"/>